<accession>Q5E839</accession>
<feature type="chain" id="PRO_1000071167" description="Phosphoadenosine 5'-phosphosulfate reductase">
    <location>
        <begin position="1"/>
        <end position="253"/>
    </location>
</feature>
<feature type="active site" description="Nucleophile; cysteine thiosulfonate intermediate" evidence="1">
    <location>
        <position position="239"/>
    </location>
</feature>
<organism>
    <name type="scientific">Aliivibrio fischeri (strain ATCC 700601 / ES114)</name>
    <name type="common">Vibrio fischeri</name>
    <dbReference type="NCBI Taxonomy" id="312309"/>
    <lineage>
        <taxon>Bacteria</taxon>
        <taxon>Pseudomonadati</taxon>
        <taxon>Pseudomonadota</taxon>
        <taxon>Gammaproteobacteria</taxon>
        <taxon>Vibrionales</taxon>
        <taxon>Vibrionaceae</taxon>
        <taxon>Aliivibrio</taxon>
    </lineage>
</organism>
<proteinExistence type="inferred from homology"/>
<dbReference type="EC" id="1.8.4.8" evidence="1"/>
<dbReference type="EMBL" id="CP000020">
    <property type="protein sequence ID" value="AAW84807.1"/>
    <property type="molecule type" value="Genomic_DNA"/>
</dbReference>
<dbReference type="RefSeq" id="WP_011261118.1">
    <property type="nucleotide sequence ID" value="NC_006840.2"/>
</dbReference>
<dbReference type="RefSeq" id="YP_203695.1">
    <property type="nucleotide sequence ID" value="NC_006840.2"/>
</dbReference>
<dbReference type="SMR" id="Q5E839"/>
<dbReference type="STRING" id="312309.VF_0312"/>
<dbReference type="EnsemblBacteria" id="AAW84807">
    <property type="protein sequence ID" value="AAW84807"/>
    <property type="gene ID" value="VF_0312"/>
</dbReference>
<dbReference type="GeneID" id="54162931"/>
<dbReference type="KEGG" id="vfi:VF_0312"/>
<dbReference type="PATRIC" id="fig|312309.11.peg.305"/>
<dbReference type="eggNOG" id="COG0175">
    <property type="taxonomic scope" value="Bacteria"/>
</dbReference>
<dbReference type="HOGENOM" id="CLU_044089_3_0_6"/>
<dbReference type="OrthoDB" id="9794018at2"/>
<dbReference type="UniPathway" id="UPA00140">
    <property type="reaction ID" value="UER00206"/>
</dbReference>
<dbReference type="Proteomes" id="UP000000537">
    <property type="component" value="Chromosome I"/>
</dbReference>
<dbReference type="GO" id="GO:0005737">
    <property type="term" value="C:cytoplasm"/>
    <property type="evidence" value="ECO:0007669"/>
    <property type="project" value="UniProtKB-SubCell"/>
</dbReference>
<dbReference type="GO" id="GO:0004604">
    <property type="term" value="F:phosphoadenylyl-sulfate reductase (thioredoxin) activity"/>
    <property type="evidence" value="ECO:0007669"/>
    <property type="project" value="UniProtKB-UniRule"/>
</dbReference>
<dbReference type="GO" id="GO:0070814">
    <property type="term" value="P:hydrogen sulfide biosynthetic process"/>
    <property type="evidence" value="ECO:0007669"/>
    <property type="project" value="UniProtKB-UniRule"/>
</dbReference>
<dbReference type="GO" id="GO:0019379">
    <property type="term" value="P:sulfate assimilation, phosphoadenylyl sulfate reduction by phosphoadenylyl-sulfate reductase (thioredoxin)"/>
    <property type="evidence" value="ECO:0007669"/>
    <property type="project" value="UniProtKB-UniRule"/>
</dbReference>
<dbReference type="CDD" id="cd23945">
    <property type="entry name" value="PAPS_reductase"/>
    <property type="match status" value="1"/>
</dbReference>
<dbReference type="FunFam" id="3.40.50.620:FF:000043">
    <property type="entry name" value="Phosphoadenosine phosphosulfate reductase"/>
    <property type="match status" value="1"/>
</dbReference>
<dbReference type="Gene3D" id="3.40.50.620">
    <property type="entry name" value="HUPs"/>
    <property type="match status" value="1"/>
</dbReference>
<dbReference type="HAMAP" id="MF_00063">
    <property type="entry name" value="CysH"/>
    <property type="match status" value="1"/>
</dbReference>
<dbReference type="InterPro" id="IPR004511">
    <property type="entry name" value="PAPS/APS_Rdtase"/>
</dbReference>
<dbReference type="InterPro" id="IPR002500">
    <property type="entry name" value="PAPS_reduct_dom"/>
</dbReference>
<dbReference type="InterPro" id="IPR011800">
    <property type="entry name" value="PAPS_reductase_CysH"/>
</dbReference>
<dbReference type="InterPro" id="IPR014729">
    <property type="entry name" value="Rossmann-like_a/b/a_fold"/>
</dbReference>
<dbReference type="NCBIfam" id="TIGR00434">
    <property type="entry name" value="cysH"/>
    <property type="match status" value="1"/>
</dbReference>
<dbReference type="NCBIfam" id="TIGR02057">
    <property type="entry name" value="PAPS_reductase"/>
    <property type="match status" value="1"/>
</dbReference>
<dbReference type="NCBIfam" id="NF002537">
    <property type="entry name" value="PRK02090.1"/>
    <property type="match status" value="1"/>
</dbReference>
<dbReference type="PANTHER" id="PTHR46509">
    <property type="entry name" value="PHOSPHOADENOSINE PHOSPHOSULFATE REDUCTASE"/>
    <property type="match status" value="1"/>
</dbReference>
<dbReference type="PANTHER" id="PTHR46509:SF1">
    <property type="entry name" value="PHOSPHOADENOSINE PHOSPHOSULFATE REDUCTASE"/>
    <property type="match status" value="1"/>
</dbReference>
<dbReference type="Pfam" id="PF01507">
    <property type="entry name" value="PAPS_reduct"/>
    <property type="match status" value="1"/>
</dbReference>
<dbReference type="PIRSF" id="PIRSF000857">
    <property type="entry name" value="PAPS_reductase"/>
    <property type="match status" value="1"/>
</dbReference>
<dbReference type="SUPFAM" id="SSF52402">
    <property type="entry name" value="Adenine nucleotide alpha hydrolases-like"/>
    <property type="match status" value="1"/>
</dbReference>
<gene>
    <name evidence="1" type="primary">cysH</name>
    <name type="ordered locus">VF_0312</name>
</gene>
<keyword id="KW-0963">Cytoplasm</keyword>
<keyword id="KW-0560">Oxidoreductase</keyword>
<keyword id="KW-1185">Reference proteome</keyword>
<comment type="function">
    <text evidence="1">Catalyzes the formation of sulfite from phosphoadenosine 5'-phosphosulfate (PAPS) using thioredoxin as an electron donor.</text>
</comment>
<comment type="catalytic activity">
    <reaction evidence="1">
        <text>[thioredoxin]-disulfide + sulfite + adenosine 3',5'-bisphosphate + 2 H(+) = [thioredoxin]-dithiol + 3'-phosphoadenylyl sulfate</text>
        <dbReference type="Rhea" id="RHEA:11724"/>
        <dbReference type="Rhea" id="RHEA-COMP:10698"/>
        <dbReference type="Rhea" id="RHEA-COMP:10700"/>
        <dbReference type="ChEBI" id="CHEBI:15378"/>
        <dbReference type="ChEBI" id="CHEBI:17359"/>
        <dbReference type="ChEBI" id="CHEBI:29950"/>
        <dbReference type="ChEBI" id="CHEBI:50058"/>
        <dbReference type="ChEBI" id="CHEBI:58339"/>
        <dbReference type="ChEBI" id="CHEBI:58343"/>
        <dbReference type="EC" id="1.8.4.8"/>
    </reaction>
</comment>
<comment type="pathway">
    <text evidence="1">Sulfur metabolism; hydrogen sulfide biosynthesis; sulfite from sulfate: step 3/3.</text>
</comment>
<comment type="subcellular location">
    <subcellularLocation>
        <location evidence="1">Cytoplasm</location>
    </subcellularLocation>
</comment>
<comment type="similarity">
    <text evidence="1">Belongs to the PAPS reductase family. CysH subfamily.</text>
</comment>
<reference key="1">
    <citation type="journal article" date="2005" name="Proc. Natl. Acad. Sci. U.S.A.">
        <title>Complete genome sequence of Vibrio fischeri: a symbiotic bacterium with pathogenic congeners.</title>
        <authorList>
            <person name="Ruby E.G."/>
            <person name="Urbanowski M."/>
            <person name="Campbell J."/>
            <person name="Dunn A."/>
            <person name="Faini M."/>
            <person name="Gunsalus R."/>
            <person name="Lostroh P."/>
            <person name="Lupp C."/>
            <person name="McCann J."/>
            <person name="Millikan D."/>
            <person name="Schaefer A."/>
            <person name="Stabb E."/>
            <person name="Stevens A."/>
            <person name="Visick K."/>
            <person name="Whistler C."/>
            <person name="Greenberg E.P."/>
        </authorList>
    </citation>
    <scope>NUCLEOTIDE SEQUENCE [LARGE SCALE GENOMIC DNA]</scope>
    <source>
        <strain>ATCC 700601 / ES114</strain>
    </source>
</reference>
<name>CYSH_ALIF1</name>
<sequence length="253" mass="29047">MPKLQLSELLSLTKVEQTLRLAEVNVELEKLTAQERVVWALENLEGNPALSSSFGIQAAVMLQLVTEVKSDTPIILTDTGYLFPETYQFIDQLTDRLNLNLHVFTADESPNWQEARYGKLWEQGVEGIEKYNKLNKVQPMRRALDQLEIGVWFSGLRREQSGSRANLPILSIQNGVFKFLPVLDWTNKEVHYFLKEYDLPYHPLWDQGYLSVGDTHTTQKWEPGMSEEETRFFGLKRECGLHEDDGELDGSGI</sequence>
<protein>
    <recommendedName>
        <fullName evidence="1">Phosphoadenosine 5'-phosphosulfate reductase</fullName>
        <shortName evidence="1">PAPS reductase</shortName>
        <ecNumber evidence="1">1.8.4.8</ecNumber>
    </recommendedName>
    <alternativeName>
        <fullName evidence="1">3'-phosphoadenylylsulfate reductase</fullName>
    </alternativeName>
    <alternativeName>
        <fullName evidence="1">PAPS reductase, thioredoxin dependent</fullName>
    </alternativeName>
    <alternativeName>
        <fullName evidence="1">PAPS sulfotransferase</fullName>
    </alternativeName>
    <alternativeName>
        <fullName evidence="1">PAdoPS reductase</fullName>
    </alternativeName>
</protein>
<evidence type="ECO:0000255" key="1">
    <source>
        <dbReference type="HAMAP-Rule" id="MF_00063"/>
    </source>
</evidence>